<sequence length="447" mass="49820">MGTRSHYLDLGFLLLLFLPAECLGAEGRLAHKLFRDLFANYTSALRPVADTDQTLNVTLEVTLSQIIDMDERNQVLTLYLWIRQEWTDAYLHWDPKAYGDLDAIRIPSRLVWRPDIVLYNKADTQPPASASTNVVVRHDGAVRWDAPAITRSSCRVDVSAFPFDAQRCGLTFGSWTHGGHQLDVRPRGTSASLADFVENVEWRVLGMPARRRVLTYGCCSEPYPDVTFTLLLRRRAAAYVCNLLLPCVFISLLAPLAFHLPADSGEKVSLGVTVLLALTVFQLILAESMPPAESVPLIGKYYMATMTMVTFSTALTILIMNLHYCGPNAHPVPAWARVLLLGHLAKGLCVRERGEPCGQSKPLESAPSLQPPPASPAGPCHEPRCLCHQEALLHHIASIASTFRSHRAAQRRHEDWKRLARVMDRFFLGIFFCMALVMSLIVLVQAL</sequence>
<feature type="signal peptide" evidence="4">
    <location>
        <begin position="1"/>
        <end position="24"/>
    </location>
</feature>
<feature type="chain" id="PRO_0000000377" description="Neuronal acetylcholine receptor subunit alpha-10">
    <location>
        <begin position="25"/>
        <end position="447"/>
    </location>
</feature>
<feature type="topological domain" description="Extracellular" evidence="4">
    <location>
        <begin position="25"/>
        <end position="237"/>
    </location>
</feature>
<feature type="transmembrane region" description="Helical" evidence="4">
    <location>
        <begin position="238"/>
        <end position="258"/>
    </location>
</feature>
<feature type="transmembrane region" description="Helical" evidence="4">
    <location>
        <begin position="268"/>
        <end position="288"/>
    </location>
</feature>
<feature type="transmembrane region" description="Helical" evidence="4">
    <location>
        <begin position="302"/>
        <end position="322"/>
    </location>
</feature>
<feature type="topological domain" description="Cytoplasmic" evidence="4">
    <location>
        <begin position="323"/>
        <end position="425"/>
    </location>
</feature>
<feature type="transmembrane region" description="Helical" evidence="4">
    <location>
        <begin position="426"/>
        <end position="446"/>
    </location>
</feature>
<feature type="site" description="Involved in the interaction with the conotoxin GeXXA" evidence="12">
    <location>
        <position position="31"/>
    </location>
</feature>
<feature type="glycosylation site" description="N-linked (GlcNAc...) asparagine" evidence="4">
    <location>
        <position position="40"/>
    </location>
</feature>
<feature type="glycosylation site" description="N-linked (GlcNAc...) asparagine" evidence="4">
    <location>
        <position position="56"/>
    </location>
</feature>
<feature type="disulfide bond" evidence="1">
    <location>
        <begin position="154"/>
        <end position="168"/>
    </location>
</feature>
<feature type="disulfide bond" description="Associated with receptor activation" evidence="1">
    <location>
        <begin position="218"/>
        <end position="219"/>
    </location>
</feature>
<feature type="mutagenesis site" description="CHRNA9-CHRNA10 receptor is 25-fold less potently inhibited by the alpha-conotoxin RgIA." evidence="11">
    <original>E</original>
    <variation>Q</variation>
    <location>
        <position position="221"/>
    </location>
</feature>
<feature type="mutagenesis site" description="CHRNA9-CHRNA10 receptor is 300-fold less potently inhibited by the alpha-conotoxin RgIA." evidence="11">
    <original>P</original>
    <variation>Q</variation>
    <location>
        <position position="224"/>
    </location>
</feature>
<comment type="function">
    <text evidence="3 5 6 8 10">Component of neuronal acetylcholine receptors (nAChRs) that function as pentameric, ligand-gated cation channels with high calcium permeability among other activities. nAChRs are excitatory neurotrasnmitter receptors formed by a collection of nAChR subunits known to mediate synaptic transmission in the nervous system and the neuromuscular junction. Each nAchR subunit confers differential attributes to channel properties, including activation, deactivation and desensitization kinetics, pH sensitivity, cation permeability, and binding to allosteric modulators (PubMed:11248107, PubMed:12117536, PubMed:14742688, PubMed:16306403). Forms heteropentamers with CHRNA9. Expressed in the inner ear, in sympathetic neurons and in other non-neuronal cells, such as skin keratinocytes and lymphocytes (PubMed:14742688, PubMed:16306403). nAChR formed by CHRNA9:CHRNA10 mediate central nervous system control of auditory and vestibular sensory processing. The channel is permeable to a range of divalent cations including calcium, the influx of which may activate a potassium current which hyperpolarizes the cell membrane (PubMed:11248107, PubMed:12117536). In the ear, mediates synaptic transmission between efferent olivocochlear fibers and hair cells of the cochlea, this may lead to a reduction in basilar membrane motion, altering the activity of auditory nerve fibers and reducing the range of dynamic hearing. This may protect against acoustic trauma (PubMed:11248107). May also regulate keratinocyte adhesion (By similarity).</text>
</comment>
<comment type="catalytic activity">
    <reaction evidence="5 6">
        <text>Ca(2+)(in) = Ca(2+)(out)</text>
        <dbReference type="Rhea" id="RHEA:29671"/>
        <dbReference type="ChEBI" id="CHEBI:29108"/>
    </reaction>
</comment>
<comment type="catalytic activity">
    <reaction evidence="6">
        <text>Mg(2+)(in) = Mg(2+)(out)</text>
        <dbReference type="Rhea" id="RHEA:29827"/>
        <dbReference type="ChEBI" id="CHEBI:18420"/>
    </reaction>
</comment>
<comment type="catalytic activity">
    <reaction evidence="2">
        <text>K(+)(in) = K(+)(out)</text>
        <dbReference type="Rhea" id="RHEA:29463"/>
        <dbReference type="ChEBI" id="CHEBI:29103"/>
    </reaction>
</comment>
<comment type="catalytic activity">
    <reaction evidence="2">
        <text>Na(+)(in) = Na(+)(out)</text>
        <dbReference type="Rhea" id="RHEA:34963"/>
        <dbReference type="ChEBI" id="CHEBI:29101"/>
    </reaction>
</comment>
<comment type="activity regulation">
    <text evidence="6 11">Activated by a myriad of ligands such as acetylcholine (PubMed:12117536). AChR activity is inhibited by the antagonist alpha-conotoxins RgIA and GeXXA, small disulfide-constrained peptides from cone snails (PubMed:25740413).</text>
</comment>
<comment type="subunit">
    <text evidence="5 6 8 11">Forms homo- or heterooligomeric channels in conjunction with CHRNA10. The native outer hair cell receptor may be composed of CHRNA9:CHRNA10 heterooligomers. Found in the stoichiometric form (CHRNA9)2:(CHRNA10)3 (PubMed:25740413).</text>
</comment>
<comment type="subcellular location">
    <subcellularLocation>
        <location evidence="13">Synaptic cell membrane</location>
        <topology evidence="4">Multi-pass membrane protein</topology>
    </subcellularLocation>
    <subcellularLocation>
        <location evidence="5 6">Cell membrane</location>
        <topology evidence="4">Multi-pass membrane protein</topology>
    </subcellularLocation>
</comment>
<comment type="tissue specificity">
    <text evidence="5 7">Expressed in the outer hair cells of the cochlea and the neurons of dorsal root ganglia.</text>
</comment>
<comment type="developmental stage">
    <text evidence="5 9">Expression in the inner hair cells of the ear is lost at the onset of hearing, around P12. This correlates with a loss of sensitivity of these cells to cholinergic stimuli.</text>
</comment>
<comment type="miscellaneous">
    <text>The heterooligomeric receptor composed of CHRNA9 and CHRNA10 has an atypical pharmacological profile, binding several non-nicotinic ligands including strychnine (a glycine receptor antagonist) and atropine (a muscarinic acetylcholine receptor antagonist).</text>
</comment>
<comment type="similarity">
    <text evidence="13">Belongs to the ligand-gated ion channel (TC 1.A.9) family. Acetylcholine receptor (TC 1.A.9.1) subfamily. Alpha-10/CHRNA10 sub-subfamily.</text>
</comment>
<dbReference type="EMBL" id="AF196344">
    <property type="protein sequence ID" value="AAF27624.1"/>
    <property type="molecule type" value="mRNA"/>
</dbReference>
<dbReference type="RefSeq" id="NP_072161.1">
    <property type="nucleotide sequence ID" value="NM_022639.1"/>
</dbReference>
<dbReference type="RefSeq" id="XP_017445156.1">
    <property type="nucleotide sequence ID" value="XM_017589667.1"/>
</dbReference>
<dbReference type="RefSeq" id="XP_063128853.1">
    <property type="nucleotide sequence ID" value="XM_063272783.1"/>
</dbReference>
<dbReference type="SMR" id="Q9JLB5"/>
<dbReference type="ComplexPortal" id="CPX-224">
    <property type="entry name" value="Neuronal nicotinic acetylcholine receptor complex, alpha9-alpha10"/>
</dbReference>
<dbReference type="FunCoup" id="Q9JLB5">
    <property type="interactions" value="14"/>
</dbReference>
<dbReference type="STRING" id="10116.ENSRNOP00000027506"/>
<dbReference type="BindingDB" id="Q9JLB5"/>
<dbReference type="ChEMBL" id="CHEMBL3461"/>
<dbReference type="DrugCentral" id="Q9JLB5"/>
<dbReference type="GuidetoPHARMACOLOGY" id="470"/>
<dbReference type="GlyCosmos" id="Q9JLB5">
    <property type="glycosylation" value="2 sites, No reported glycans"/>
</dbReference>
<dbReference type="GlyGen" id="Q9JLB5">
    <property type="glycosylation" value="2 sites"/>
</dbReference>
<dbReference type="PhosphoSitePlus" id="Q9JLB5"/>
<dbReference type="PaxDb" id="10116-ENSRNOP00000027506"/>
<dbReference type="Ensembl" id="ENSRNOT00000027507.4">
    <property type="protein sequence ID" value="ENSRNOP00000027506.2"/>
    <property type="gene ID" value="ENSRNOG00000020293.4"/>
</dbReference>
<dbReference type="GeneID" id="64574"/>
<dbReference type="KEGG" id="rno:64574"/>
<dbReference type="UCSC" id="RGD:620142">
    <property type="organism name" value="rat"/>
</dbReference>
<dbReference type="AGR" id="RGD:620142"/>
<dbReference type="CTD" id="57053"/>
<dbReference type="RGD" id="620142">
    <property type="gene designation" value="Chrna10"/>
</dbReference>
<dbReference type="eggNOG" id="KOG3645">
    <property type="taxonomic scope" value="Eukaryota"/>
</dbReference>
<dbReference type="GeneTree" id="ENSGT00940000160721"/>
<dbReference type="HOGENOM" id="CLU_018074_0_0_1"/>
<dbReference type="InParanoid" id="Q9JLB5"/>
<dbReference type="OMA" id="VENVEWH"/>
<dbReference type="OrthoDB" id="5975154at2759"/>
<dbReference type="PhylomeDB" id="Q9JLB5"/>
<dbReference type="TreeFam" id="TF315605"/>
<dbReference type="PRO" id="PR:Q9JLB5"/>
<dbReference type="Proteomes" id="UP000002494">
    <property type="component" value="Chromosome 1"/>
</dbReference>
<dbReference type="Bgee" id="ENSRNOG00000020293">
    <property type="expression patterns" value="Expressed in spleen"/>
</dbReference>
<dbReference type="GO" id="GO:0030424">
    <property type="term" value="C:axon"/>
    <property type="evidence" value="ECO:0000314"/>
    <property type="project" value="RGD"/>
</dbReference>
<dbReference type="GO" id="GO:0098981">
    <property type="term" value="C:cholinergic synapse"/>
    <property type="evidence" value="ECO:0000314"/>
    <property type="project" value="SynGO"/>
</dbReference>
<dbReference type="GO" id="GO:0043005">
    <property type="term" value="C:neuron projection"/>
    <property type="evidence" value="ECO:0000318"/>
    <property type="project" value="GO_Central"/>
</dbReference>
<dbReference type="GO" id="GO:0043204">
    <property type="term" value="C:perikaryon"/>
    <property type="evidence" value="ECO:0000314"/>
    <property type="project" value="RGD"/>
</dbReference>
<dbReference type="GO" id="GO:0005886">
    <property type="term" value="C:plasma membrane"/>
    <property type="evidence" value="ECO:0000318"/>
    <property type="project" value="GO_Central"/>
</dbReference>
<dbReference type="GO" id="GO:0099634">
    <property type="term" value="C:postsynaptic specialization membrane"/>
    <property type="evidence" value="ECO:0000314"/>
    <property type="project" value="SynGO"/>
</dbReference>
<dbReference type="GO" id="GO:0045202">
    <property type="term" value="C:synapse"/>
    <property type="evidence" value="ECO:0000318"/>
    <property type="project" value="GO_Central"/>
</dbReference>
<dbReference type="GO" id="GO:1902495">
    <property type="term" value="C:transmembrane transporter complex"/>
    <property type="evidence" value="ECO:0000318"/>
    <property type="project" value="GO_Central"/>
</dbReference>
<dbReference type="GO" id="GO:0022848">
    <property type="term" value="F:acetylcholine-gated monoatomic cation-selective channel activity"/>
    <property type="evidence" value="ECO:0000266"/>
    <property type="project" value="RGD"/>
</dbReference>
<dbReference type="GO" id="GO:0005262">
    <property type="term" value="F:calcium channel activity"/>
    <property type="evidence" value="ECO:0007669"/>
    <property type="project" value="UniProtKB-KW"/>
</dbReference>
<dbReference type="GO" id="GO:0005231">
    <property type="term" value="F:excitatory extracellular ligand-gated monoatomic ion channel activity"/>
    <property type="evidence" value="ECO:0000318"/>
    <property type="project" value="GO_Central"/>
</dbReference>
<dbReference type="GO" id="GO:0022850">
    <property type="term" value="F:serotonin-gated monoatomic cation channel activity"/>
    <property type="evidence" value="ECO:0000318"/>
    <property type="project" value="GO_Central"/>
</dbReference>
<dbReference type="GO" id="GO:1904315">
    <property type="term" value="F:transmitter-gated monoatomic ion channel activity involved in regulation of postsynaptic membrane potential"/>
    <property type="evidence" value="ECO:0000314"/>
    <property type="project" value="SynGO"/>
</dbReference>
<dbReference type="GO" id="GO:0007268">
    <property type="term" value="P:chemical synaptic transmission"/>
    <property type="evidence" value="ECO:0000318"/>
    <property type="project" value="GO_Central"/>
</dbReference>
<dbReference type="GO" id="GO:0050910">
    <property type="term" value="P:detection of mechanical stimulus involved in sensory perception of sound"/>
    <property type="evidence" value="ECO:0000266"/>
    <property type="project" value="RGD"/>
</dbReference>
<dbReference type="GO" id="GO:0042472">
    <property type="term" value="P:inner ear morphogenesis"/>
    <property type="evidence" value="ECO:0000266"/>
    <property type="project" value="RGD"/>
</dbReference>
<dbReference type="GO" id="GO:0051899">
    <property type="term" value="P:membrane depolarization"/>
    <property type="evidence" value="ECO:0007669"/>
    <property type="project" value="Ensembl"/>
</dbReference>
<dbReference type="GO" id="GO:0034220">
    <property type="term" value="P:monoatomic ion transmembrane transport"/>
    <property type="evidence" value="ECO:0000318"/>
    <property type="project" value="GO_Central"/>
</dbReference>
<dbReference type="GO" id="GO:0070373">
    <property type="term" value="P:negative regulation of ERK1 and ERK2 cascade"/>
    <property type="evidence" value="ECO:0000315"/>
    <property type="project" value="RGD"/>
</dbReference>
<dbReference type="GO" id="GO:0007204">
    <property type="term" value="P:positive regulation of cytosolic calcium ion concentration"/>
    <property type="evidence" value="ECO:0000266"/>
    <property type="project" value="RGD"/>
</dbReference>
<dbReference type="GO" id="GO:0042391">
    <property type="term" value="P:regulation of membrane potential"/>
    <property type="evidence" value="ECO:0000318"/>
    <property type="project" value="GO_Central"/>
</dbReference>
<dbReference type="GO" id="GO:0010996">
    <property type="term" value="P:response to auditory stimulus"/>
    <property type="evidence" value="ECO:0007669"/>
    <property type="project" value="Ensembl"/>
</dbReference>
<dbReference type="GO" id="GO:0007271">
    <property type="term" value="P:synaptic transmission, cholinergic"/>
    <property type="evidence" value="ECO:0000266"/>
    <property type="project" value="RGD"/>
</dbReference>
<dbReference type="CDD" id="cd19051">
    <property type="entry name" value="LGIC_TM_cation"/>
    <property type="match status" value="1"/>
</dbReference>
<dbReference type="FunFam" id="2.70.170.10:FF:000029">
    <property type="entry name" value="Cholinergic receptor nicotinic alpha 10 subunit"/>
    <property type="match status" value="1"/>
</dbReference>
<dbReference type="FunFam" id="1.20.58.390:FF:000009">
    <property type="entry name" value="Cholinergic receptor nicotinic alpha 9 subunit"/>
    <property type="match status" value="1"/>
</dbReference>
<dbReference type="FunFam" id="1.20.58.390:FF:000045">
    <property type="entry name" value="neuronal acetylcholine receptor subunit alpha-10"/>
    <property type="match status" value="1"/>
</dbReference>
<dbReference type="Gene3D" id="2.70.170.10">
    <property type="entry name" value="Neurotransmitter-gated ion-channel ligand-binding domain"/>
    <property type="match status" value="1"/>
</dbReference>
<dbReference type="Gene3D" id="1.20.58.390">
    <property type="entry name" value="Neurotransmitter-gated ion-channel transmembrane domain"/>
    <property type="match status" value="2"/>
</dbReference>
<dbReference type="InterPro" id="IPR006202">
    <property type="entry name" value="Neur_chan_lig-bd"/>
</dbReference>
<dbReference type="InterPro" id="IPR036734">
    <property type="entry name" value="Neur_chan_lig-bd_sf"/>
</dbReference>
<dbReference type="InterPro" id="IPR006201">
    <property type="entry name" value="Neur_channel"/>
</dbReference>
<dbReference type="InterPro" id="IPR036719">
    <property type="entry name" value="Neuro-gated_channel_TM_sf"/>
</dbReference>
<dbReference type="InterPro" id="IPR038050">
    <property type="entry name" value="Neuro_actylchol_rec"/>
</dbReference>
<dbReference type="InterPro" id="IPR006029">
    <property type="entry name" value="Neurotrans-gated_channel_TM"/>
</dbReference>
<dbReference type="InterPro" id="IPR018000">
    <property type="entry name" value="Neurotransmitter_ion_chnl_CS"/>
</dbReference>
<dbReference type="InterPro" id="IPR002394">
    <property type="entry name" value="Nicotinic_acetylcholine_rcpt"/>
</dbReference>
<dbReference type="NCBIfam" id="TIGR00860">
    <property type="entry name" value="LIC"/>
    <property type="match status" value="1"/>
</dbReference>
<dbReference type="PANTHER" id="PTHR18945">
    <property type="entry name" value="NEUROTRANSMITTER GATED ION CHANNEL"/>
    <property type="match status" value="1"/>
</dbReference>
<dbReference type="Pfam" id="PF02931">
    <property type="entry name" value="Neur_chan_LBD"/>
    <property type="match status" value="1"/>
</dbReference>
<dbReference type="Pfam" id="PF02932">
    <property type="entry name" value="Neur_chan_memb"/>
    <property type="match status" value="1"/>
</dbReference>
<dbReference type="PRINTS" id="PR00254">
    <property type="entry name" value="NICOTINICR"/>
</dbReference>
<dbReference type="PRINTS" id="PR00252">
    <property type="entry name" value="NRIONCHANNEL"/>
</dbReference>
<dbReference type="SUPFAM" id="SSF90112">
    <property type="entry name" value="Neurotransmitter-gated ion-channel transmembrane pore"/>
    <property type="match status" value="1"/>
</dbReference>
<dbReference type="SUPFAM" id="SSF63712">
    <property type="entry name" value="Nicotinic receptor ligand binding domain-like"/>
    <property type="match status" value="1"/>
</dbReference>
<dbReference type="PROSITE" id="PS00236">
    <property type="entry name" value="NEUROTR_ION_CHANNEL"/>
    <property type="match status" value="1"/>
</dbReference>
<evidence type="ECO:0000250" key="1"/>
<evidence type="ECO:0000250" key="2">
    <source>
        <dbReference type="UniProtKB" id="P43144"/>
    </source>
</evidence>
<evidence type="ECO:0000250" key="3">
    <source>
        <dbReference type="UniProtKB" id="Q9GZZ6"/>
    </source>
</evidence>
<evidence type="ECO:0000255" key="4"/>
<evidence type="ECO:0000269" key="5">
    <source>
    </source>
</evidence>
<evidence type="ECO:0000269" key="6">
    <source>
    </source>
</evidence>
<evidence type="ECO:0000269" key="7">
    <source>
    </source>
</evidence>
<evidence type="ECO:0000269" key="8">
    <source>
    </source>
</evidence>
<evidence type="ECO:0000269" key="9">
    <source>
    </source>
</evidence>
<evidence type="ECO:0000269" key="10">
    <source>
    </source>
</evidence>
<evidence type="ECO:0000269" key="11">
    <source>
    </source>
</evidence>
<evidence type="ECO:0000269" key="12">
    <source>
    </source>
</evidence>
<evidence type="ECO:0000305" key="13"/>
<keyword id="KW-0106">Calcium</keyword>
<keyword id="KW-0107">Calcium channel</keyword>
<keyword id="KW-0109">Calcium transport</keyword>
<keyword id="KW-1003">Cell membrane</keyword>
<keyword id="KW-1015">Disulfide bond</keyword>
<keyword id="KW-0325">Glycoprotein</keyword>
<keyword id="KW-0407">Ion channel</keyword>
<keyword id="KW-0406">Ion transport</keyword>
<keyword id="KW-1071">Ligand-gated ion channel</keyword>
<keyword id="KW-0472">Membrane</keyword>
<keyword id="KW-0675">Receptor</keyword>
<keyword id="KW-1185">Reference proteome</keyword>
<keyword id="KW-0732">Signal</keyword>
<keyword id="KW-0770">Synapse</keyword>
<keyword id="KW-0812">Transmembrane</keyword>
<keyword id="KW-1133">Transmembrane helix</keyword>
<keyword id="KW-0813">Transport</keyword>
<name>ACH10_RAT</name>
<accession>Q9JLB5</accession>
<reference key="1">
    <citation type="journal article" date="2001" name="Proc. Natl. Acad. Sci. U.S.A.">
        <title>Alpha10: a determinant of nicotinic cholinergic receptor function in mammalian vestibular and cochlear mechanosensory hair cells.</title>
        <authorList>
            <person name="Elgoyhen A.B."/>
            <person name="Vetter D.E."/>
            <person name="Katz E."/>
            <person name="Rothlin C.V."/>
            <person name="Heinemann S.F."/>
            <person name="Boulter J."/>
        </authorList>
    </citation>
    <scope>NUCLEOTIDE SEQUENCE [MRNA]</scope>
    <scope>FUNCTION</scope>
    <scope>INTERACTION WITH CHRNA9</scope>
    <scope>TISSUE SPECIFICITY</scope>
    <scope>DEVELOPMENTAL STAGE</scope>
    <source>
        <strain>Sprague-Dawley</strain>
    </source>
</reference>
<reference key="2">
    <citation type="journal article" date="2002" name="Hear. Res.">
        <title>The alpha9alpha10 nicotinic acetylcholine receptor is permeable to and is modulated by divalent cations.</title>
        <authorList>
            <person name="Weisstaub N."/>
            <person name="Vetter D.E."/>
            <person name="Elgoyhen A.B."/>
            <person name="Katz E."/>
        </authorList>
    </citation>
    <scope>FUNCTION</scope>
    <scope>INTERACTION WITH CHRNA9</scope>
    <scope>CATALYTIC ACTIVITY</scope>
    <scope>ACTIVITY REGULATION</scope>
</reference>
<reference key="3">
    <citation type="journal article" date="2002" name="Neuroscience">
        <title>Coexpression of alpha 9 and alpha 10 nicotinic acetylcholine receptors in rat dorsal root ganglion neurons.</title>
        <authorList>
            <person name="Lips K.S."/>
            <person name="Pfeil U."/>
            <person name="Kummer W."/>
        </authorList>
    </citation>
    <scope>TISSUE SPECIFICITY</scope>
</reference>
<reference key="4">
    <citation type="journal article" date="2004" name="J. Neurosci.">
        <title>Developmental regulation of nicotinic synapses on cochlear inner hair cells.</title>
        <authorList>
            <person name="Katz E."/>
            <person name="Elgoyhen A.B."/>
            <person name="Gomez-Casati M.E."/>
            <person name="Knipper M."/>
            <person name="Vetter D.E."/>
            <person name="Fuchs P.A."/>
            <person name="Glowatzki E."/>
        </authorList>
    </citation>
    <scope>DEVELOPMENTAL STAGE</scope>
</reference>
<reference key="5">
    <citation type="journal article" date="2004" name="Mol. Pharmacol.">
        <title>Pharmacological properties of alpha 9 alpha 10 nicotinic acetylcholine receptors revealed by heterologous expression of subunit chimeras.</title>
        <authorList>
            <person name="Baker E.R."/>
            <person name="Zwart R."/>
            <person name="Sher E."/>
            <person name="Millar N.S."/>
        </authorList>
    </citation>
    <scope>FUNCTION</scope>
    <scope>INTERACTION WITH CHRNA9</scope>
</reference>
<reference key="6">
    <citation type="journal article" date="2005" name="J. Neurosci.">
        <title>Stoichiometry of the alpha9alpha10 nicotinic cholinergic receptor.</title>
        <authorList>
            <person name="Plazas P.V."/>
            <person name="Katz E."/>
            <person name="Gomez-Casati M.E."/>
            <person name="Bouzat C."/>
            <person name="Elgoyhen A.B."/>
        </authorList>
    </citation>
    <scope>FUNCTION</scope>
    <scope>SUBUNIT</scope>
    <scope>STOICHIOMETRY</scope>
    <scope>ACTIVITY REGULATION</scope>
</reference>
<reference key="7">
    <citation type="journal article" date="2015" name="Sci. Rep.">
        <title>Conotoxin alphaD-GeXXA utilizes a novel strategy to antagonize nicotinic acetylcholine receptors.</title>
        <authorList>
            <person name="Xu S."/>
            <person name="Zhang T."/>
            <person name="Kompella S.N."/>
            <person name="Yan M."/>
            <person name="Lu A."/>
            <person name="Wang Y."/>
            <person name="Shao X."/>
            <person name="Chi C."/>
            <person name="Adams D.J."/>
            <person name="Ding J."/>
            <person name="Wang C."/>
        </authorList>
    </citation>
    <scope>SITE HIS-31</scope>
    <scope>SUBUNIT</scope>
</reference>
<reference key="8">
    <citation type="journal article" date="2015" name="Mol. Pharmacol.">
        <title>Molecular interaction of alpha-conotoxin RgIA with the rat alpha9alpha10 nicotinic acetylcholine receptor.</title>
        <authorList>
            <person name="Azam L."/>
            <person name="Papakyriakou A."/>
            <person name="Zouridakis M."/>
            <person name="Giastas P."/>
            <person name="Tzartos S.J."/>
            <person name="McIntosh J.M."/>
        </authorList>
    </citation>
    <scope>MUTAGENESIS OF GLU-221 AND PRO-224</scope>
    <scope>SUBUNIT</scope>
</reference>
<reference key="9">
    <citation type="journal article" date="2016" name="Mol. Pharmacol.">
        <title>Corrections to 'Molecular interaction of alpha-conotoxin RgIA with the rat alpha9alpha10 nicotinic acetylcholine receptor'.</title>
        <authorList>
            <person name="Azam L."/>
            <person name="Papakyriakou A."/>
            <person name="Zouridakis M."/>
            <person name="Giastas P."/>
            <person name="Tzartos S.J."/>
            <person name="McIntosh J.M."/>
        </authorList>
    </citation>
    <scope>ERRATUM OF PUBMED:25740413</scope>
</reference>
<organism>
    <name type="scientific">Rattus norvegicus</name>
    <name type="common">Rat</name>
    <dbReference type="NCBI Taxonomy" id="10116"/>
    <lineage>
        <taxon>Eukaryota</taxon>
        <taxon>Metazoa</taxon>
        <taxon>Chordata</taxon>
        <taxon>Craniata</taxon>
        <taxon>Vertebrata</taxon>
        <taxon>Euteleostomi</taxon>
        <taxon>Mammalia</taxon>
        <taxon>Eutheria</taxon>
        <taxon>Euarchontoglires</taxon>
        <taxon>Glires</taxon>
        <taxon>Rodentia</taxon>
        <taxon>Myomorpha</taxon>
        <taxon>Muroidea</taxon>
        <taxon>Muridae</taxon>
        <taxon>Murinae</taxon>
        <taxon>Rattus</taxon>
    </lineage>
</organism>
<proteinExistence type="evidence at protein level"/>
<gene>
    <name type="primary">Chrna10</name>
</gene>
<protein>
    <recommendedName>
        <fullName>Neuronal acetylcholine receptor subunit alpha-10</fullName>
    </recommendedName>
    <alternativeName>
        <fullName>Nicotinic acetylcholine receptor subunit alpha-10</fullName>
        <shortName>NACHR alpha-10</shortName>
    </alternativeName>
</protein>